<geneLocation type="plasmid">
    <name>sym pNGR234a</name>
</geneLocation>
<proteinExistence type="inferred from homology"/>
<dbReference type="EMBL" id="U00090">
    <property type="protein sequence ID" value="AAB92469.1"/>
    <property type="molecule type" value="Genomic_DNA"/>
</dbReference>
<dbReference type="RefSeq" id="NP_444041.1">
    <property type="nucleotide sequence ID" value="NC_000914.2"/>
</dbReference>
<dbReference type="RefSeq" id="WP_010875218.1">
    <property type="nucleotide sequence ID" value="NC_000914.2"/>
</dbReference>
<dbReference type="SMR" id="P55636"/>
<dbReference type="KEGG" id="rhi:NGR_a01840"/>
<dbReference type="PATRIC" id="fig|394.7.peg.182"/>
<dbReference type="eggNOG" id="COG4974">
    <property type="taxonomic scope" value="Bacteria"/>
</dbReference>
<dbReference type="HOGENOM" id="CLU_027562_9_1_5"/>
<dbReference type="OrthoDB" id="9801717at2"/>
<dbReference type="Proteomes" id="UP000001054">
    <property type="component" value="Plasmid pNGR234a"/>
</dbReference>
<dbReference type="GO" id="GO:0003677">
    <property type="term" value="F:DNA binding"/>
    <property type="evidence" value="ECO:0007669"/>
    <property type="project" value="UniProtKB-KW"/>
</dbReference>
<dbReference type="GO" id="GO:0015074">
    <property type="term" value="P:DNA integration"/>
    <property type="evidence" value="ECO:0007669"/>
    <property type="project" value="UniProtKB-KW"/>
</dbReference>
<dbReference type="GO" id="GO:0006310">
    <property type="term" value="P:DNA recombination"/>
    <property type="evidence" value="ECO:0007669"/>
    <property type="project" value="UniProtKB-KW"/>
</dbReference>
<dbReference type="GO" id="GO:0075713">
    <property type="term" value="P:establishment of integrated proviral latency"/>
    <property type="evidence" value="ECO:0007669"/>
    <property type="project" value="UniProtKB-KW"/>
</dbReference>
<dbReference type="GO" id="GO:0046718">
    <property type="term" value="P:symbiont entry into host cell"/>
    <property type="evidence" value="ECO:0007669"/>
    <property type="project" value="UniProtKB-KW"/>
</dbReference>
<dbReference type="GO" id="GO:0044826">
    <property type="term" value="P:viral genome integration into host DNA"/>
    <property type="evidence" value="ECO:0007669"/>
    <property type="project" value="UniProtKB-KW"/>
</dbReference>
<dbReference type="CDD" id="cd01182">
    <property type="entry name" value="INT_RitC_C_like"/>
    <property type="match status" value="1"/>
</dbReference>
<dbReference type="Gene3D" id="1.10.150.130">
    <property type="match status" value="1"/>
</dbReference>
<dbReference type="Gene3D" id="1.10.443.10">
    <property type="entry name" value="Intergrase catalytic core"/>
    <property type="match status" value="1"/>
</dbReference>
<dbReference type="InterPro" id="IPR044068">
    <property type="entry name" value="CB"/>
</dbReference>
<dbReference type="InterPro" id="IPR011010">
    <property type="entry name" value="DNA_brk_join_enz"/>
</dbReference>
<dbReference type="InterPro" id="IPR013762">
    <property type="entry name" value="Integrase-like_cat_sf"/>
</dbReference>
<dbReference type="InterPro" id="IPR002104">
    <property type="entry name" value="Integrase_catalytic"/>
</dbReference>
<dbReference type="InterPro" id="IPR010998">
    <property type="entry name" value="Integrase_recombinase_N"/>
</dbReference>
<dbReference type="InterPro" id="IPR004107">
    <property type="entry name" value="Integrase_SAM-like_N"/>
</dbReference>
<dbReference type="InterPro" id="IPR050090">
    <property type="entry name" value="Tyrosine_recombinase_XerCD"/>
</dbReference>
<dbReference type="PANTHER" id="PTHR30349:SF41">
    <property type="entry name" value="INTEGRASE_RECOMBINASE PROTEIN MJ0367-RELATED"/>
    <property type="match status" value="1"/>
</dbReference>
<dbReference type="PANTHER" id="PTHR30349">
    <property type="entry name" value="PHAGE INTEGRASE-RELATED"/>
    <property type="match status" value="1"/>
</dbReference>
<dbReference type="Pfam" id="PF02899">
    <property type="entry name" value="Phage_int_SAM_1"/>
    <property type="match status" value="1"/>
</dbReference>
<dbReference type="Pfam" id="PF00589">
    <property type="entry name" value="Phage_integrase"/>
    <property type="match status" value="1"/>
</dbReference>
<dbReference type="SUPFAM" id="SSF56349">
    <property type="entry name" value="DNA breaking-rejoining enzymes"/>
    <property type="match status" value="1"/>
</dbReference>
<dbReference type="PROSITE" id="PS51900">
    <property type="entry name" value="CB"/>
    <property type="match status" value="1"/>
</dbReference>
<dbReference type="PROSITE" id="PS51898">
    <property type="entry name" value="TYR_RECOMBINASE"/>
    <property type="match status" value="1"/>
</dbReference>
<organism>
    <name type="scientific">Sinorhizobium fredii (strain NBRC 101917 / NGR234)</name>
    <dbReference type="NCBI Taxonomy" id="394"/>
    <lineage>
        <taxon>Bacteria</taxon>
        <taxon>Pseudomonadati</taxon>
        <taxon>Pseudomonadota</taxon>
        <taxon>Alphaproteobacteria</taxon>
        <taxon>Hyphomicrobiales</taxon>
        <taxon>Rhizobiaceae</taxon>
        <taxon>Sinorhizobium/Ensifer group</taxon>
        <taxon>Sinorhizobium</taxon>
    </lineage>
</organism>
<name>Y4RC_SINFN</name>
<evidence type="ECO:0000255" key="1">
    <source>
        <dbReference type="PROSITE-ProRule" id="PRU01246"/>
    </source>
</evidence>
<evidence type="ECO:0000255" key="2">
    <source>
        <dbReference type="PROSITE-ProRule" id="PRU01248"/>
    </source>
</evidence>
<evidence type="ECO:0000305" key="3"/>
<gene>
    <name type="ordered locus">NGR_a01840</name>
    <name type="ORF">y4rC</name>
</gene>
<keyword id="KW-0229">DNA integration</keyword>
<keyword id="KW-0233">DNA recombination</keyword>
<keyword id="KW-0238">DNA-binding</keyword>
<keyword id="KW-0614">Plasmid</keyword>
<keyword id="KW-1185">Reference proteome</keyword>
<keyword id="KW-0814">Transposable element</keyword>
<keyword id="KW-1179">Viral genome integration</keyword>
<keyword id="KW-1160">Virus entry into host cell</keyword>
<sequence length="332" mass="37710">MTKHASLAPLLESFFLQRLMQQRQASPHTISSYRDTFRQLLKFAERRLRKPPSRLNFEEIDAPLIVAFLDDLENRQGISVRSRNLRLTAIHSFFRYAAFEIPEHSAQIQRVLAIPSKRFTRTLVNFLTRPEVDALLAAPDRSTWSGRRDHAFLLVAVQTGLRLSEITGLKRDDLFFGTGAHLRVIGKGRKERCTPFAKSTTAVLRNWLKEPQRGDQGILFPSARGERLSVHGVQYMLNKHRQIASAMSPSLEGKRVTVHRLRHTMAMDLLQAGVDRAVIALWLGHESVETTQIYLEATLAMKEAALAKTSPYSGKSSRFRPDDNLLAFLNSL</sequence>
<reference key="1">
    <citation type="journal article" date="1997" name="Nature">
        <title>Molecular basis of symbiosis between Rhizobium and legumes.</title>
        <authorList>
            <person name="Freiberg C.A."/>
            <person name="Fellay R."/>
            <person name="Bairoch A."/>
            <person name="Broughton W.J."/>
            <person name="Rosenthal A."/>
            <person name="Perret X."/>
        </authorList>
    </citation>
    <scope>NUCLEOTIDE SEQUENCE [LARGE SCALE GENOMIC DNA]</scope>
    <source>
        <strain>NBRC 101917 / NGR234</strain>
    </source>
</reference>
<reference key="2">
    <citation type="journal article" date="2009" name="Appl. Environ. Microbiol.">
        <title>Rhizobium sp. strain NGR234 possesses a remarkable number of secretion systems.</title>
        <authorList>
            <person name="Schmeisser C."/>
            <person name="Liesegang H."/>
            <person name="Krysciak D."/>
            <person name="Bakkou N."/>
            <person name="Le Quere A."/>
            <person name="Wollherr A."/>
            <person name="Heinemeyer I."/>
            <person name="Morgenstern B."/>
            <person name="Pommerening-Roeser A."/>
            <person name="Flores M."/>
            <person name="Palacios R."/>
            <person name="Brenner S."/>
            <person name="Gottschalk G."/>
            <person name="Schmitz R.A."/>
            <person name="Broughton W.J."/>
            <person name="Perret X."/>
            <person name="Strittmatter A.W."/>
            <person name="Streit W.R."/>
        </authorList>
    </citation>
    <scope>NUCLEOTIDE SEQUENCE [LARGE SCALE GENOMIC DNA]</scope>
    <source>
        <strain>NBRC 101917 / NGR234</strain>
    </source>
</reference>
<protein>
    <recommendedName>
        <fullName>Putative integrase/recombinase y4rC</fullName>
    </recommendedName>
</protein>
<feature type="chain" id="PRO_0000197579" description="Putative integrase/recombinase y4rC">
    <location>
        <begin position="1"/>
        <end position="332"/>
    </location>
</feature>
<feature type="domain" description="Core-binding (CB)" evidence="2">
    <location>
        <begin position="5"/>
        <end position="98"/>
    </location>
</feature>
<feature type="domain" description="Tyr recombinase" evidence="1">
    <location>
        <begin position="122"/>
        <end position="307"/>
    </location>
</feature>
<feature type="active site" evidence="1">
    <location>
        <position position="162"/>
    </location>
</feature>
<feature type="active site" evidence="1">
    <location>
        <position position="187"/>
    </location>
</feature>
<feature type="active site" evidence="1">
    <location>
        <position position="259"/>
    </location>
</feature>
<feature type="active site" evidence="1">
    <location>
        <position position="262"/>
    </location>
</feature>
<feature type="active site" evidence="1">
    <location>
        <position position="285"/>
    </location>
</feature>
<feature type="active site" description="O-(3'-phospho-DNA)-tyrosine intermediate" evidence="1">
    <location>
        <position position="294"/>
    </location>
</feature>
<accession>P55636</accession>
<comment type="similarity">
    <text evidence="3">Belongs to the 'phage' integrase family.</text>
</comment>